<protein>
    <recommendedName>
        <fullName evidence="1">3-dehydroquinate dehydratase</fullName>
        <shortName evidence="1">3-dehydroquinase</shortName>
        <ecNumber evidence="1">4.2.1.10</ecNumber>
    </recommendedName>
    <alternativeName>
        <fullName evidence="1">Type I DHQase</fullName>
    </alternativeName>
    <alternativeName>
        <fullName evidence="1">Type I dehydroquinase</fullName>
        <shortName evidence="1">DHQ1</shortName>
    </alternativeName>
</protein>
<keyword id="KW-0028">Amino-acid biosynthesis</keyword>
<keyword id="KW-0057">Aromatic amino acid biosynthesis</keyword>
<keyword id="KW-0456">Lyase</keyword>
<keyword id="KW-0704">Schiff base</keyword>
<dbReference type="EC" id="4.2.1.10" evidence="1"/>
<dbReference type="EMBL" id="CP000936">
    <property type="protein sequence ID" value="ACA36949.1"/>
    <property type="molecule type" value="Genomic_DNA"/>
</dbReference>
<dbReference type="RefSeq" id="WP_000767754.1">
    <property type="nucleotide sequence ID" value="NC_010380.1"/>
</dbReference>
<dbReference type="SMR" id="B1ICH8"/>
<dbReference type="KEGG" id="spv:SPH_1509"/>
<dbReference type="HOGENOM" id="CLU_064444_0_0_9"/>
<dbReference type="UniPathway" id="UPA00053">
    <property type="reaction ID" value="UER00086"/>
</dbReference>
<dbReference type="Proteomes" id="UP000002163">
    <property type="component" value="Chromosome"/>
</dbReference>
<dbReference type="GO" id="GO:0003855">
    <property type="term" value="F:3-dehydroquinate dehydratase activity"/>
    <property type="evidence" value="ECO:0007669"/>
    <property type="project" value="UniProtKB-UniRule"/>
</dbReference>
<dbReference type="GO" id="GO:0046279">
    <property type="term" value="P:3,4-dihydroxybenzoate biosynthetic process"/>
    <property type="evidence" value="ECO:0007669"/>
    <property type="project" value="TreeGrafter"/>
</dbReference>
<dbReference type="GO" id="GO:0008652">
    <property type="term" value="P:amino acid biosynthetic process"/>
    <property type="evidence" value="ECO:0007669"/>
    <property type="project" value="UniProtKB-KW"/>
</dbReference>
<dbReference type="GO" id="GO:0009073">
    <property type="term" value="P:aromatic amino acid family biosynthetic process"/>
    <property type="evidence" value="ECO:0007669"/>
    <property type="project" value="UniProtKB-KW"/>
</dbReference>
<dbReference type="GO" id="GO:0009423">
    <property type="term" value="P:chorismate biosynthetic process"/>
    <property type="evidence" value="ECO:0007669"/>
    <property type="project" value="UniProtKB-UniRule"/>
</dbReference>
<dbReference type="CDD" id="cd00502">
    <property type="entry name" value="DHQase_I"/>
    <property type="match status" value="1"/>
</dbReference>
<dbReference type="FunFam" id="3.20.20.70:FF:000217">
    <property type="entry name" value="3-dehydroquinate dehydratase"/>
    <property type="match status" value="1"/>
</dbReference>
<dbReference type="Gene3D" id="3.20.20.70">
    <property type="entry name" value="Aldolase class I"/>
    <property type="match status" value="1"/>
</dbReference>
<dbReference type="HAMAP" id="MF_00214">
    <property type="entry name" value="AroD"/>
    <property type="match status" value="1"/>
</dbReference>
<dbReference type="InterPro" id="IPR013785">
    <property type="entry name" value="Aldolase_TIM"/>
</dbReference>
<dbReference type="InterPro" id="IPR001381">
    <property type="entry name" value="DHquinase_I"/>
</dbReference>
<dbReference type="InterPro" id="IPR050146">
    <property type="entry name" value="Type-I_3-dehydroquinase"/>
</dbReference>
<dbReference type="NCBIfam" id="TIGR01093">
    <property type="entry name" value="aroD"/>
    <property type="match status" value="1"/>
</dbReference>
<dbReference type="PANTHER" id="PTHR43699">
    <property type="entry name" value="3-DEHYDROQUINATE DEHYDRATASE"/>
    <property type="match status" value="1"/>
</dbReference>
<dbReference type="PANTHER" id="PTHR43699:SF1">
    <property type="entry name" value="3-DEHYDROQUINATE DEHYDRATASE"/>
    <property type="match status" value="1"/>
</dbReference>
<dbReference type="Pfam" id="PF01487">
    <property type="entry name" value="DHquinase_I"/>
    <property type="match status" value="1"/>
</dbReference>
<dbReference type="SUPFAM" id="SSF51569">
    <property type="entry name" value="Aldolase"/>
    <property type="match status" value="1"/>
</dbReference>
<organism>
    <name type="scientific">Streptococcus pneumoniae (strain Hungary19A-6)</name>
    <dbReference type="NCBI Taxonomy" id="487214"/>
    <lineage>
        <taxon>Bacteria</taxon>
        <taxon>Bacillati</taxon>
        <taxon>Bacillota</taxon>
        <taxon>Bacilli</taxon>
        <taxon>Lactobacillales</taxon>
        <taxon>Streptococcaceae</taxon>
        <taxon>Streptococcus</taxon>
    </lineage>
</organism>
<proteinExistence type="inferred from homology"/>
<accession>B1ICH8</accession>
<evidence type="ECO:0000255" key="1">
    <source>
        <dbReference type="HAMAP-Rule" id="MF_00214"/>
    </source>
</evidence>
<comment type="function">
    <text evidence="1">Involved in the third step of the chorismate pathway, which leads to the biosynthesis of aromatic amino acids. Catalyzes the cis-dehydration of 3-dehydroquinate (DHQ) and introduces the first double bond of the aromatic ring to yield 3-dehydroshikimate.</text>
</comment>
<comment type="catalytic activity">
    <reaction evidence="1">
        <text>3-dehydroquinate = 3-dehydroshikimate + H2O</text>
        <dbReference type="Rhea" id="RHEA:21096"/>
        <dbReference type="ChEBI" id="CHEBI:15377"/>
        <dbReference type="ChEBI" id="CHEBI:16630"/>
        <dbReference type="ChEBI" id="CHEBI:32364"/>
        <dbReference type="EC" id="4.2.1.10"/>
    </reaction>
</comment>
<comment type="pathway">
    <text evidence="1">Metabolic intermediate biosynthesis; chorismate biosynthesis; chorismate from D-erythrose 4-phosphate and phosphoenolpyruvate: step 3/7.</text>
</comment>
<comment type="subunit">
    <text evidence="1">Homodimer.</text>
</comment>
<comment type="similarity">
    <text evidence="1">Belongs to the type-I 3-dehydroquinase family.</text>
</comment>
<gene>
    <name evidence="1" type="primary">aroD</name>
    <name type="ordered locus">SPH_1509</name>
</gene>
<sequence>MKLIVSVMPRSLEEAQALDATRYLDADIIEWRADYLPKEAILQVAPAIFEKFAGRELVFTLRTRSEGGEIDLSPEEYIHLIKEVAQFYQPDYIDFEYYSYKDVFEEMLDFPNLVLSYHNFQETPENMMEILSELTILNPKLVKVAVMAHTEQDVLDLMNYTRGFKTLNPEQEYVTISMGKVGKVSRITADVTGSSWSFASLDEVSAPGQISLASMKKIREILDEA</sequence>
<name>AROD_STRPI</name>
<feature type="chain" id="PRO_1000099921" description="3-dehydroquinate dehydratase">
    <location>
        <begin position="1"/>
        <end position="225"/>
    </location>
</feature>
<feature type="active site" description="Proton donor/acceptor" evidence="1">
    <location>
        <position position="118"/>
    </location>
</feature>
<feature type="active site" description="Schiff-base intermediate with substrate" evidence="1">
    <location>
        <position position="143"/>
    </location>
</feature>
<feature type="binding site" evidence="1">
    <location>
        <position position="6"/>
    </location>
    <ligand>
        <name>3-dehydroquinate</name>
        <dbReference type="ChEBI" id="CHEBI:32364"/>
    </ligand>
</feature>
<feature type="binding site" evidence="1">
    <location>
        <begin position="30"/>
        <end position="32"/>
    </location>
    <ligand>
        <name>3-dehydroquinate</name>
        <dbReference type="ChEBI" id="CHEBI:32364"/>
    </ligand>
</feature>
<feature type="binding site" evidence="1">
    <location>
        <position position="62"/>
    </location>
    <ligand>
        <name>3-dehydroquinate</name>
        <dbReference type="ChEBI" id="CHEBI:32364"/>
    </ligand>
</feature>
<feature type="binding site" evidence="1">
    <location>
        <position position="186"/>
    </location>
    <ligand>
        <name>3-dehydroquinate</name>
        <dbReference type="ChEBI" id="CHEBI:32364"/>
    </ligand>
</feature>
<feature type="binding site" evidence="1">
    <location>
        <position position="205"/>
    </location>
    <ligand>
        <name>3-dehydroquinate</name>
        <dbReference type="ChEBI" id="CHEBI:32364"/>
    </ligand>
</feature>
<feature type="binding site" evidence="1">
    <location>
        <position position="209"/>
    </location>
    <ligand>
        <name>3-dehydroquinate</name>
        <dbReference type="ChEBI" id="CHEBI:32364"/>
    </ligand>
</feature>
<reference key="1">
    <citation type="journal article" date="2010" name="Genome Biol.">
        <title>Structure and dynamics of the pan-genome of Streptococcus pneumoniae and closely related species.</title>
        <authorList>
            <person name="Donati C."/>
            <person name="Hiller N.L."/>
            <person name="Tettelin H."/>
            <person name="Muzzi A."/>
            <person name="Croucher N.J."/>
            <person name="Angiuoli S.V."/>
            <person name="Oggioni M."/>
            <person name="Dunning Hotopp J.C."/>
            <person name="Hu F.Z."/>
            <person name="Riley D.R."/>
            <person name="Covacci A."/>
            <person name="Mitchell T.J."/>
            <person name="Bentley S.D."/>
            <person name="Kilian M."/>
            <person name="Ehrlich G.D."/>
            <person name="Rappuoli R."/>
            <person name="Moxon E.R."/>
            <person name="Masignani V."/>
        </authorList>
    </citation>
    <scope>NUCLEOTIDE SEQUENCE [LARGE SCALE GENOMIC DNA]</scope>
    <source>
        <strain>Hungary19A-6</strain>
    </source>
</reference>